<organism>
    <name type="scientific">Escherichia coli O139:H28 (strain E24377A / ETEC)</name>
    <dbReference type="NCBI Taxonomy" id="331111"/>
    <lineage>
        <taxon>Bacteria</taxon>
        <taxon>Pseudomonadati</taxon>
        <taxon>Pseudomonadota</taxon>
        <taxon>Gammaproteobacteria</taxon>
        <taxon>Enterobacterales</taxon>
        <taxon>Enterobacteriaceae</taxon>
        <taxon>Escherichia</taxon>
    </lineage>
</organism>
<feature type="chain" id="PRO_0000402607" description="Pyrimidine monooxygenase RutA">
    <location>
        <begin position="1"/>
        <end position="393"/>
    </location>
</feature>
<feature type="binding site" evidence="1">
    <location>
        <begin position="79"/>
        <end position="80"/>
    </location>
    <ligand>
        <name>FMN</name>
        <dbReference type="ChEBI" id="CHEBI:58210"/>
    </ligand>
</feature>
<feature type="binding site" evidence="1">
    <location>
        <position position="145"/>
    </location>
    <ligand>
        <name>FMN</name>
        <dbReference type="ChEBI" id="CHEBI:58210"/>
    </ligand>
</feature>
<feature type="binding site" evidence="1">
    <location>
        <position position="154"/>
    </location>
    <ligand>
        <name>FMN</name>
        <dbReference type="ChEBI" id="CHEBI:58210"/>
    </ligand>
</feature>
<feature type="binding site" evidence="1">
    <location>
        <begin position="170"/>
        <end position="171"/>
    </location>
    <ligand>
        <name>FMN</name>
        <dbReference type="ChEBI" id="CHEBI:58210"/>
    </ligand>
</feature>
<feature type="binding site" evidence="1">
    <location>
        <position position="220"/>
    </location>
    <ligand>
        <name>FMN</name>
        <dbReference type="ChEBI" id="CHEBI:58210"/>
    </ligand>
</feature>
<accession>A7ZKB7</accession>
<evidence type="ECO:0000255" key="1">
    <source>
        <dbReference type="HAMAP-Rule" id="MF_01699"/>
    </source>
</evidence>
<reference key="1">
    <citation type="journal article" date="2008" name="J. Bacteriol.">
        <title>The pangenome structure of Escherichia coli: comparative genomic analysis of E. coli commensal and pathogenic isolates.</title>
        <authorList>
            <person name="Rasko D.A."/>
            <person name="Rosovitz M.J."/>
            <person name="Myers G.S.A."/>
            <person name="Mongodin E.F."/>
            <person name="Fricke W.F."/>
            <person name="Gajer P."/>
            <person name="Crabtree J."/>
            <person name="Sebaihia M."/>
            <person name="Thomson N.R."/>
            <person name="Chaudhuri R."/>
            <person name="Henderson I.R."/>
            <person name="Sperandio V."/>
            <person name="Ravel J."/>
        </authorList>
    </citation>
    <scope>NUCLEOTIDE SEQUENCE [LARGE SCALE GENOMIC DNA]</scope>
    <source>
        <strain>E24377A / ETEC</strain>
    </source>
</reference>
<proteinExistence type="inferred from homology"/>
<comment type="function">
    <text evidence="1">Catalyzes the pyrimidine ring opening between N-3 and C-4 by an unusual flavin hydroperoxide-catalyzed mechanism, adding oxygen atoms in the process to yield ureidoacrylate peracid, that immediately reacts with FMN forming ureidoacrylate and FMN-N(5)-oxide. The FMN-N(5)-oxide reacts spontaneously with NADH to produce FMN. Requires the flavin reductase RutF to regenerate FMN in vivo.</text>
</comment>
<comment type="catalytic activity">
    <reaction evidence="1">
        <text>uracil + FMNH2 + NADH + O2 = (Z)-3-ureidoacrylate + FMN + NAD(+) + H2O + H(+)</text>
        <dbReference type="Rhea" id="RHEA:31587"/>
        <dbReference type="ChEBI" id="CHEBI:15377"/>
        <dbReference type="ChEBI" id="CHEBI:15378"/>
        <dbReference type="ChEBI" id="CHEBI:15379"/>
        <dbReference type="ChEBI" id="CHEBI:17568"/>
        <dbReference type="ChEBI" id="CHEBI:57540"/>
        <dbReference type="ChEBI" id="CHEBI:57618"/>
        <dbReference type="ChEBI" id="CHEBI:57945"/>
        <dbReference type="ChEBI" id="CHEBI:58210"/>
        <dbReference type="ChEBI" id="CHEBI:59891"/>
        <dbReference type="EC" id="1.14.99.46"/>
    </reaction>
</comment>
<comment type="catalytic activity">
    <reaction evidence="1">
        <text>thymine + FMNH2 + NADH + O2 = (Z)-2-methylureidoacrylate + FMN + NAD(+) + H2O + H(+)</text>
        <dbReference type="Rhea" id="RHEA:31599"/>
        <dbReference type="ChEBI" id="CHEBI:15377"/>
        <dbReference type="ChEBI" id="CHEBI:15378"/>
        <dbReference type="ChEBI" id="CHEBI:15379"/>
        <dbReference type="ChEBI" id="CHEBI:17821"/>
        <dbReference type="ChEBI" id="CHEBI:57540"/>
        <dbReference type="ChEBI" id="CHEBI:57618"/>
        <dbReference type="ChEBI" id="CHEBI:57945"/>
        <dbReference type="ChEBI" id="CHEBI:58210"/>
        <dbReference type="ChEBI" id="CHEBI:143783"/>
        <dbReference type="EC" id="1.14.99.46"/>
    </reaction>
</comment>
<comment type="induction">
    <text evidence="1">Up-regulated by the nitrogen regulatory protein C (NtrC also called GlnG) and repressed by RutR.</text>
</comment>
<comment type="similarity">
    <text evidence="1">Belongs to the NtaA/SnaA/DszA monooxygenase family. RutA subfamily.</text>
</comment>
<keyword id="KW-0285">Flavoprotein</keyword>
<keyword id="KW-0288">FMN</keyword>
<keyword id="KW-0503">Monooxygenase</keyword>
<keyword id="KW-0521">NADP</keyword>
<keyword id="KW-0560">Oxidoreductase</keyword>
<keyword id="KW-1185">Reference proteome</keyword>
<protein>
    <recommendedName>
        <fullName evidence="1">Pyrimidine monooxygenase RutA</fullName>
        <ecNumber evidence="1">1.14.99.46</ecNumber>
    </recommendedName>
</protein>
<gene>
    <name evidence="1" type="primary">rutA</name>
    <name type="ordered locus">EcE24377A_1130</name>
</gene>
<dbReference type="EC" id="1.14.99.46" evidence="1"/>
<dbReference type="EMBL" id="CP000800">
    <property type="protein sequence ID" value="ABV17192.1"/>
    <property type="molecule type" value="Genomic_DNA"/>
</dbReference>
<dbReference type="SMR" id="A7ZKB7"/>
<dbReference type="KEGG" id="ecw:EcE24377A_1130"/>
<dbReference type="HOGENOM" id="CLU_027853_1_1_6"/>
<dbReference type="Proteomes" id="UP000001122">
    <property type="component" value="Chromosome"/>
</dbReference>
<dbReference type="GO" id="GO:0008726">
    <property type="term" value="F:alkanesulfonate monooxygenase activity"/>
    <property type="evidence" value="ECO:0007669"/>
    <property type="project" value="TreeGrafter"/>
</dbReference>
<dbReference type="GO" id="GO:0052614">
    <property type="term" value="F:uracil oxygenase activity"/>
    <property type="evidence" value="ECO:0007669"/>
    <property type="project" value="UniProtKB-EC"/>
</dbReference>
<dbReference type="GO" id="GO:0046306">
    <property type="term" value="P:alkanesulfonate catabolic process"/>
    <property type="evidence" value="ECO:0007669"/>
    <property type="project" value="TreeGrafter"/>
</dbReference>
<dbReference type="GO" id="GO:0019740">
    <property type="term" value="P:nitrogen utilization"/>
    <property type="evidence" value="ECO:0007669"/>
    <property type="project" value="UniProtKB-UniRule"/>
</dbReference>
<dbReference type="GO" id="GO:0006212">
    <property type="term" value="P:uracil catabolic process"/>
    <property type="evidence" value="ECO:0007669"/>
    <property type="project" value="UniProtKB-UniRule"/>
</dbReference>
<dbReference type="CDD" id="cd01094">
    <property type="entry name" value="Alkanesulfonate_monoxygenase"/>
    <property type="match status" value="1"/>
</dbReference>
<dbReference type="FunFam" id="3.20.20.30:FF:000003">
    <property type="entry name" value="Pyrimidine monooxygenase RutA"/>
    <property type="match status" value="1"/>
</dbReference>
<dbReference type="Gene3D" id="3.20.20.30">
    <property type="entry name" value="Luciferase-like domain"/>
    <property type="match status" value="1"/>
</dbReference>
<dbReference type="HAMAP" id="MF_01699">
    <property type="entry name" value="RutA"/>
    <property type="match status" value="1"/>
</dbReference>
<dbReference type="InterPro" id="IPR011251">
    <property type="entry name" value="Luciferase-like_dom"/>
</dbReference>
<dbReference type="InterPro" id="IPR036661">
    <property type="entry name" value="Luciferase-like_sf"/>
</dbReference>
<dbReference type="InterPro" id="IPR019914">
    <property type="entry name" value="Pyrimidine_monooxygenase_RutA"/>
</dbReference>
<dbReference type="InterPro" id="IPR050172">
    <property type="entry name" value="SsuD_RutA_monooxygenase"/>
</dbReference>
<dbReference type="NCBIfam" id="TIGR03612">
    <property type="entry name" value="RutA"/>
    <property type="match status" value="1"/>
</dbReference>
<dbReference type="PANTHER" id="PTHR42847">
    <property type="entry name" value="ALKANESULFONATE MONOOXYGENASE"/>
    <property type="match status" value="1"/>
</dbReference>
<dbReference type="PANTHER" id="PTHR42847:SF4">
    <property type="entry name" value="ALKANESULFONATE MONOOXYGENASE-RELATED"/>
    <property type="match status" value="1"/>
</dbReference>
<dbReference type="Pfam" id="PF00296">
    <property type="entry name" value="Bac_luciferase"/>
    <property type="match status" value="1"/>
</dbReference>
<dbReference type="SUPFAM" id="SSF51679">
    <property type="entry name" value="Bacterial luciferase-like"/>
    <property type="match status" value="1"/>
</dbReference>
<name>RUTA_ECO24</name>
<sequence>MQTSHYAAEKDMQDAVPRLTFTLRDEERLMMKIGVFVPIGNNGWLISTHAPQYMPTFELNKAIVQKAEHYHFDFALSMIKLRGFGGKTEFWDHNLESFTLMAGLAAVTSRIQIYATAATLTLPPAIVARMAATIDSISGGRFGVNLVTGWQKPEYEQMGIWPGDDYFSRRYDYLTEYVQVLRDLWGSGKSDFKGDFFTMNDCRVSPQPSVPMKVICAGQSDAGMAFSAQYADFNFCFGKGVNTPTAFAPTAARMKQAAEQTGRDVGSYVLFMVIADETDDAARAKWEHYKAGADEEALSWLTEQSQKDTRSGTDTNVRQMADPTSAVNINMGTLVGSYASVARMLDEVASVPGAEGVLLTFDDFLSGIETFGERIQPLMQCRAHLPALTQEVA</sequence>